<sequence>MENYLIDNLDRGILEALMGNARTAYAELAKQFGVSPGTIHVRVEKMKQAGIITGARIDVSPKQLGYDVGCFIGIILKSAKDYPSALAKLESLDEVTEAYYTTGHYSIFIKVMCRSIDALQHVLINKIQTIDEIQSTETLIVLQNPIMRTIKP</sequence>
<protein>
    <recommendedName>
        <fullName>Regulatory protein AsnC</fullName>
    </recommendedName>
</protein>
<name>ASNC_ECOLI</name>
<organism>
    <name type="scientific">Escherichia coli (strain K12)</name>
    <dbReference type="NCBI Taxonomy" id="83333"/>
    <lineage>
        <taxon>Bacteria</taxon>
        <taxon>Pseudomonadati</taxon>
        <taxon>Pseudomonadota</taxon>
        <taxon>Gammaproteobacteria</taxon>
        <taxon>Enterobacterales</taxon>
        <taxon>Enterobacteriaceae</taxon>
        <taxon>Escherichia</taxon>
    </lineage>
</organism>
<keyword id="KW-0002">3D-structure</keyword>
<keyword id="KW-0010">Activator</keyword>
<keyword id="KW-0238">DNA-binding</keyword>
<keyword id="KW-1185">Reference proteome</keyword>
<keyword id="KW-0804">Transcription</keyword>
<keyword id="KW-0805">Transcription regulation</keyword>
<reference key="1">
    <citation type="journal article" date="1981" name="Nucleic Acids Res.">
        <title>Nucleotide sequence of the asnA gene coding for asparagine synthetase of E. coli K-12.</title>
        <authorList>
            <person name="Nakamura M."/>
            <person name="Yamada M."/>
            <person name="Hirota Y."/>
            <person name="Sugimoto K."/>
            <person name="Oka A."/>
            <person name="Takanami M."/>
        </authorList>
    </citation>
    <scope>NUCLEOTIDE SEQUENCE [GENOMIC DNA]</scope>
    <source>
        <strain>K12</strain>
    </source>
</reference>
<reference key="2">
    <citation type="journal article" date="1983" name="Gene">
        <title>The replication origin region of Escherichia coli: nucleotide sequence and functional units.</title>
        <authorList>
            <person name="Buhk H.-J."/>
            <person name="Messer W."/>
        </authorList>
    </citation>
    <scope>NUCLEOTIDE SEQUENCE [GENOMIC DNA]</scope>
    <source>
        <strain>K12</strain>
    </source>
</reference>
<reference key="3">
    <citation type="journal article" date="1993" name="Genomics">
        <title>DNA sequence and analysis of 136 kilobases of the Escherichia coli genome: organizational symmetry around the origin of replication.</title>
        <authorList>
            <person name="Burland V.D."/>
            <person name="Plunkett G. III"/>
            <person name="Daniels D.L."/>
            <person name="Blattner F.R."/>
        </authorList>
    </citation>
    <scope>NUCLEOTIDE SEQUENCE [LARGE SCALE GENOMIC DNA]</scope>
    <source>
        <strain>K12 / MG1655 / ATCC 47076</strain>
    </source>
</reference>
<reference key="4">
    <citation type="journal article" date="1997" name="Science">
        <title>The complete genome sequence of Escherichia coli K-12.</title>
        <authorList>
            <person name="Blattner F.R."/>
            <person name="Plunkett G. III"/>
            <person name="Bloch C.A."/>
            <person name="Perna N.T."/>
            <person name="Burland V."/>
            <person name="Riley M."/>
            <person name="Collado-Vides J."/>
            <person name="Glasner J.D."/>
            <person name="Rode C.K."/>
            <person name="Mayhew G.F."/>
            <person name="Gregor J."/>
            <person name="Davis N.W."/>
            <person name="Kirkpatrick H.A."/>
            <person name="Goeden M.A."/>
            <person name="Rose D.J."/>
            <person name="Mau B."/>
            <person name="Shao Y."/>
        </authorList>
    </citation>
    <scope>NUCLEOTIDE SEQUENCE [LARGE SCALE GENOMIC DNA]</scope>
    <source>
        <strain>K12 / MG1655 / ATCC 47076</strain>
    </source>
</reference>
<reference key="5">
    <citation type="journal article" date="2006" name="Mol. Syst. Biol.">
        <title>Highly accurate genome sequences of Escherichia coli K-12 strains MG1655 and W3110.</title>
        <authorList>
            <person name="Hayashi K."/>
            <person name="Morooka N."/>
            <person name="Yamamoto Y."/>
            <person name="Fujita K."/>
            <person name="Isono K."/>
            <person name="Choi S."/>
            <person name="Ohtsubo E."/>
            <person name="Baba T."/>
            <person name="Wanner B.L."/>
            <person name="Mori H."/>
            <person name="Horiuchi T."/>
        </authorList>
    </citation>
    <scope>NUCLEOTIDE SEQUENCE [LARGE SCALE GENOMIC DNA]</scope>
    <source>
        <strain>K12 / W3110 / ATCC 27325 / DSM 5911</strain>
    </source>
</reference>
<reference key="6">
    <citation type="journal article" date="1985" name="Nucleic Acids Res.">
        <title>Site-directed mutagenesis of the Escherichia coli chromosome near oriC: identification and characterization of asnC, a regulatory element in E. coli asparagine metabolism.</title>
        <authorList>
            <person name="de Wind N."/>
            <person name="de Jong M."/>
            <person name="Meijer M."/>
            <person name="Stuitje A.R."/>
        </authorList>
    </citation>
    <scope>FUNCTION</scope>
</reference>
<reference key="7">
    <citation type="journal article" date="1985" name="J. Bacteriol.">
        <title>AsnC: an autogenously regulated activator of asparagine synthetase A transcription in Escherichia coli.</title>
        <authorList>
            <person name="Koelling R."/>
            <person name="Lother H."/>
        </authorList>
    </citation>
    <scope>FUNCTION</scope>
</reference>
<reference key="8">
    <citation type="journal article" date="1988" name="Mol. Gen. Genet.">
        <title>AsnC, a multifunctional regulator of genes located around the replication origin of Escherichia coli, oriC.</title>
        <authorList>
            <person name="Koelling R."/>
            <person name="Gielow A."/>
            <person name="Seufert W."/>
            <person name="Kuecherer C."/>
            <person name="Messer W."/>
        </authorList>
    </citation>
    <scope>FUNCTION</scope>
</reference>
<dbReference type="EMBL" id="V00263">
    <property type="status" value="NOT_ANNOTATED_CDS"/>
    <property type="molecule type" value="Genomic_DNA"/>
</dbReference>
<dbReference type="EMBL" id="K00826">
    <property type="protein sequence ID" value="AAA24252.1"/>
    <property type="molecule type" value="Genomic_DNA"/>
</dbReference>
<dbReference type="EMBL" id="L10328">
    <property type="protein sequence ID" value="AAA62095.1"/>
    <property type="molecule type" value="Genomic_DNA"/>
</dbReference>
<dbReference type="EMBL" id="U00096">
    <property type="protein sequence ID" value="AAC76766.1"/>
    <property type="molecule type" value="Genomic_DNA"/>
</dbReference>
<dbReference type="EMBL" id="AP009048">
    <property type="protein sequence ID" value="BAE77545.1"/>
    <property type="molecule type" value="Genomic_DNA"/>
</dbReference>
<dbReference type="PIR" id="A04434">
    <property type="entry name" value="QQECE1"/>
</dbReference>
<dbReference type="RefSeq" id="NP_418199.1">
    <property type="nucleotide sequence ID" value="NC_000913.3"/>
</dbReference>
<dbReference type="RefSeq" id="WP_000432970.1">
    <property type="nucleotide sequence ID" value="NZ_STEB01000015.1"/>
</dbReference>
<dbReference type="RefSeq" id="YP_006952152.1">
    <property type="nucleotide sequence ID" value="NC_019049.1"/>
</dbReference>
<dbReference type="PDB" id="2CG4">
    <property type="method" value="X-ray"/>
    <property type="resolution" value="2.40 A"/>
    <property type="chains" value="A/B=1-152"/>
</dbReference>
<dbReference type="PDBsum" id="2CG4"/>
<dbReference type="SMR" id="P0ACI6"/>
<dbReference type="BioGRID" id="4263262">
    <property type="interactions" value="149"/>
</dbReference>
<dbReference type="BioGRID" id="852561">
    <property type="interactions" value="1"/>
</dbReference>
<dbReference type="DIP" id="DIP-9178N"/>
<dbReference type="FunCoup" id="P0ACI6">
    <property type="interactions" value="23"/>
</dbReference>
<dbReference type="IntAct" id="P0ACI6">
    <property type="interactions" value="1"/>
</dbReference>
<dbReference type="STRING" id="511145.b3743"/>
<dbReference type="jPOST" id="P0ACI6"/>
<dbReference type="PaxDb" id="511145-b3743"/>
<dbReference type="EnsemblBacteria" id="AAC76766">
    <property type="protein sequence ID" value="AAC76766"/>
    <property type="gene ID" value="b3743"/>
</dbReference>
<dbReference type="GeneID" id="86861851"/>
<dbReference type="GeneID" id="948259"/>
<dbReference type="KEGG" id="ecj:JW3721"/>
<dbReference type="KEGG" id="eco:b3743"/>
<dbReference type="KEGG" id="ecoc:C3026_20280"/>
<dbReference type="PATRIC" id="fig|1411691.4.peg.2957"/>
<dbReference type="EchoBASE" id="EB0091"/>
<dbReference type="eggNOG" id="COG1522">
    <property type="taxonomic scope" value="Bacteria"/>
</dbReference>
<dbReference type="HOGENOM" id="CLU_091233_5_0_6"/>
<dbReference type="InParanoid" id="P0ACI6"/>
<dbReference type="OMA" id="EDCWFIA"/>
<dbReference type="OrthoDB" id="1094536at2"/>
<dbReference type="PhylomeDB" id="P0ACI6"/>
<dbReference type="BioCyc" id="EcoCyc:PD00250"/>
<dbReference type="EvolutionaryTrace" id="P0ACI6"/>
<dbReference type="PRO" id="PR:P0ACI6"/>
<dbReference type="Proteomes" id="UP000000625">
    <property type="component" value="Chromosome"/>
</dbReference>
<dbReference type="GO" id="GO:0003700">
    <property type="term" value="F:DNA-binding transcription factor activity"/>
    <property type="evidence" value="ECO:0000314"/>
    <property type="project" value="EcoCyc"/>
</dbReference>
<dbReference type="GO" id="GO:0042802">
    <property type="term" value="F:identical protein binding"/>
    <property type="evidence" value="ECO:0000314"/>
    <property type="project" value="EcoCyc"/>
</dbReference>
<dbReference type="GO" id="GO:0043565">
    <property type="term" value="F:sequence-specific DNA binding"/>
    <property type="evidence" value="ECO:0000250"/>
    <property type="project" value="EcoCyc"/>
</dbReference>
<dbReference type="GO" id="GO:0045892">
    <property type="term" value="P:negative regulation of DNA-templated transcription"/>
    <property type="evidence" value="ECO:0000314"/>
    <property type="project" value="EcoCyc"/>
</dbReference>
<dbReference type="GO" id="GO:0045893">
    <property type="term" value="P:positive regulation of DNA-templated transcription"/>
    <property type="evidence" value="ECO:0000314"/>
    <property type="project" value="EcoCyc"/>
</dbReference>
<dbReference type="GO" id="GO:0043200">
    <property type="term" value="P:response to amino acid"/>
    <property type="evidence" value="ECO:0000314"/>
    <property type="project" value="EcoCyc"/>
</dbReference>
<dbReference type="CDD" id="cd00090">
    <property type="entry name" value="HTH_ARSR"/>
    <property type="match status" value="1"/>
</dbReference>
<dbReference type="FunFam" id="1.10.10.10:FF:000078">
    <property type="entry name" value="Transcriptional regulator AsnC"/>
    <property type="match status" value="1"/>
</dbReference>
<dbReference type="FunFam" id="3.30.70.920:FF:000002">
    <property type="entry name" value="Transcriptional regulator AsnC"/>
    <property type="match status" value="1"/>
</dbReference>
<dbReference type="Gene3D" id="3.30.70.920">
    <property type="match status" value="1"/>
</dbReference>
<dbReference type="Gene3D" id="1.10.10.10">
    <property type="entry name" value="Winged helix-like DNA-binding domain superfamily/Winged helix DNA-binding domain"/>
    <property type="match status" value="1"/>
</dbReference>
<dbReference type="InterPro" id="IPR011991">
    <property type="entry name" value="ArsR-like_HTH"/>
</dbReference>
<dbReference type="InterPro" id="IPR000485">
    <property type="entry name" value="AsnC-type_HTH_dom"/>
</dbReference>
<dbReference type="InterPro" id="IPR011008">
    <property type="entry name" value="Dimeric_a/b-barrel"/>
</dbReference>
<dbReference type="InterPro" id="IPR019888">
    <property type="entry name" value="Tscrpt_reg_AsnC-like"/>
</dbReference>
<dbReference type="InterPro" id="IPR019887">
    <property type="entry name" value="Tscrpt_reg_AsnC/Lrp_C"/>
</dbReference>
<dbReference type="InterPro" id="IPR019885">
    <property type="entry name" value="Tscrpt_reg_HTH_AsnC-type_CS"/>
</dbReference>
<dbReference type="InterPro" id="IPR036388">
    <property type="entry name" value="WH-like_DNA-bd_sf"/>
</dbReference>
<dbReference type="InterPro" id="IPR036390">
    <property type="entry name" value="WH_DNA-bd_sf"/>
</dbReference>
<dbReference type="NCBIfam" id="NF008384">
    <property type="entry name" value="PRK11179.1"/>
    <property type="match status" value="1"/>
</dbReference>
<dbReference type="PANTHER" id="PTHR30154">
    <property type="entry name" value="LEUCINE-RESPONSIVE REGULATORY PROTEIN"/>
    <property type="match status" value="1"/>
</dbReference>
<dbReference type="PANTHER" id="PTHR30154:SF34">
    <property type="entry name" value="TRANSCRIPTIONAL REGULATOR AZLB"/>
    <property type="match status" value="1"/>
</dbReference>
<dbReference type="Pfam" id="PF01037">
    <property type="entry name" value="AsnC_trans_reg"/>
    <property type="match status" value="1"/>
</dbReference>
<dbReference type="Pfam" id="PF13412">
    <property type="entry name" value="HTH_24"/>
    <property type="match status" value="1"/>
</dbReference>
<dbReference type="PRINTS" id="PR00033">
    <property type="entry name" value="HTHASNC"/>
</dbReference>
<dbReference type="SMART" id="SM00344">
    <property type="entry name" value="HTH_ASNC"/>
    <property type="match status" value="1"/>
</dbReference>
<dbReference type="SUPFAM" id="SSF54909">
    <property type="entry name" value="Dimeric alpha+beta barrel"/>
    <property type="match status" value="1"/>
</dbReference>
<dbReference type="SUPFAM" id="SSF46785">
    <property type="entry name" value="Winged helix' DNA-binding domain"/>
    <property type="match status" value="1"/>
</dbReference>
<dbReference type="PROSITE" id="PS00519">
    <property type="entry name" value="HTH_ASNC_1"/>
    <property type="match status" value="1"/>
</dbReference>
<dbReference type="PROSITE" id="PS50956">
    <property type="entry name" value="HTH_ASNC_2"/>
    <property type="match status" value="1"/>
</dbReference>
<comment type="function">
    <text evidence="2 3 4">Activator of asnA transcription; autogenous regulator of its own transcription; and repressor of the expression of gidA at a post-transcriptional level.</text>
</comment>
<comment type="interaction">
    <interactant intactId="EBI-1133670">
        <id>P0ACI6</id>
    </interactant>
    <interactant intactId="EBI-909144">
        <id>P31658</id>
        <label>hchA</label>
    </interactant>
    <organismsDiffer>false</organismsDiffer>
    <experiments>2</experiments>
</comment>
<proteinExistence type="evidence at protein level"/>
<evidence type="ECO:0000255" key="1">
    <source>
        <dbReference type="PROSITE-ProRule" id="PRU00319"/>
    </source>
</evidence>
<evidence type="ECO:0000269" key="2">
    <source>
    </source>
</evidence>
<evidence type="ECO:0000269" key="3">
    <source>
    </source>
</evidence>
<evidence type="ECO:0000269" key="4">
    <source>
    </source>
</evidence>
<evidence type="ECO:0007829" key="5">
    <source>
        <dbReference type="PDB" id="2CG4"/>
    </source>
</evidence>
<gene>
    <name type="primary">asnC</name>
    <name type="ordered locus">b3743</name>
    <name type="ordered locus">JW3721</name>
</gene>
<feature type="chain" id="PRO_0000111719" description="Regulatory protein AsnC">
    <location>
        <begin position="1"/>
        <end position="152"/>
    </location>
</feature>
<feature type="domain" description="HTH asnC-type" evidence="1">
    <location>
        <begin position="6"/>
        <end position="67"/>
    </location>
</feature>
<feature type="DNA-binding region" description="H-T-H motif" evidence="1">
    <location>
        <begin position="25"/>
        <end position="44"/>
    </location>
</feature>
<feature type="helix" evidence="5">
    <location>
        <begin position="8"/>
        <end position="19"/>
    </location>
</feature>
<feature type="helix" evidence="5">
    <location>
        <begin position="25"/>
        <end position="32"/>
    </location>
</feature>
<feature type="helix" evidence="5">
    <location>
        <begin position="36"/>
        <end position="48"/>
    </location>
</feature>
<feature type="strand" evidence="5">
    <location>
        <begin position="51"/>
        <end position="59"/>
    </location>
</feature>
<feature type="turn" evidence="5">
    <location>
        <begin position="61"/>
        <end position="65"/>
    </location>
</feature>
<feature type="strand" evidence="5">
    <location>
        <begin position="68"/>
        <end position="78"/>
    </location>
</feature>
<feature type="helix" evidence="5">
    <location>
        <begin position="79"/>
        <end position="81"/>
    </location>
</feature>
<feature type="helix" evidence="5">
    <location>
        <begin position="82"/>
        <end position="90"/>
    </location>
</feature>
<feature type="strand" evidence="5">
    <location>
        <begin position="95"/>
        <end position="104"/>
    </location>
</feature>
<feature type="strand" evidence="5">
    <location>
        <begin position="106"/>
        <end position="114"/>
    </location>
</feature>
<feature type="helix" evidence="5">
    <location>
        <begin position="116"/>
        <end position="125"/>
    </location>
</feature>
<feature type="turn" evidence="5">
    <location>
        <begin position="126"/>
        <end position="129"/>
    </location>
</feature>
<feature type="strand" evidence="5">
    <location>
        <begin position="133"/>
        <end position="140"/>
    </location>
</feature>
<feature type="strand" evidence="5">
    <location>
        <begin position="142"/>
        <end position="147"/>
    </location>
</feature>
<accession>P0ACI6</accession>
<accession>P03809</accession>
<accession>Q2M861</accession>